<proteinExistence type="evidence at protein level"/>
<reference key="1">
    <citation type="submission" date="2006-10" db="EMBL/GenBank/DDBJ databases">
        <authorList>
            <person name="Fleischmann R.D."/>
            <person name="Dodson R.J."/>
            <person name="Haft D.H."/>
            <person name="Merkel J.S."/>
            <person name="Nelson W.C."/>
            <person name="Fraser C.M."/>
        </authorList>
    </citation>
    <scope>NUCLEOTIDE SEQUENCE [LARGE SCALE GENOMIC DNA]</scope>
    <source>
        <strain>ATCC 700084 / mc(2)155</strain>
    </source>
</reference>
<reference key="2">
    <citation type="journal article" date="2007" name="Genome Biol.">
        <title>Interrupted coding sequences in Mycobacterium smegmatis: authentic mutations or sequencing errors?</title>
        <authorList>
            <person name="Deshayes C."/>
            <person name="Perrodou E."/>
            <person name="Gallien S."/>
            <person name="Euphrasie D."/>
            <person name="Schaeffer C."/>
            <person name="Van-Dorsselaer A."/>
            <person name="Poch O."/>
            <person name="Lecompte O."/>
            <person name="Reyrat J.-M."/>
        </authorList>
    </citation>
    <scope>NUCLEOTIDE SEQUENCE [LARGE SCALE GENOMIC DNA]</scope>
    <source>
        <strain>ATCC 700084 / mc(2)155</strain>
    </source>
</reference>
<reference key="3">
    <citation type="journal article" date="2009" name="Genome Res.">
        <title>Ortho-proteogenomics: multiple proteomes investigation through orthology and a new MS-based protocol.</title>
        <authorList>
            <person name="Gallien S."/>
            <person name="Perrodou E."/>
            <person name="Carapito C."/>
            <person name="Deshayes C."/>
            <person name="Reyrat J.-M."/>
            <person name="Van Dorsselaer A."/>
            <person name="Poch O."/>
            <person name="Schaeffer C."/>
            <person name="Lecompte O."/>
        </authorList>
    </citation>
    <scope>NUCLEOTIDE SEQUENCE [LARGE SCALE GENOMIC DNA]</scope>
    <source>
        <strain>ATCC 700084 / mc(2)155</strain>
    </source>
</reference>
<reference key="4">
    <citation type="journal article" date="2012" name="J. Biol. Chem.">
        <title>Toxin-antitoxin systems of Mycobacterium smegmatis are essential for cell survival.</title>
        <authorList>
            <person name="Frampton R."/>
            <person name="Aggio R.B."/>
            <person name="Villas-Boas S.G."/>
            <person name="Arcus V.L."/>
            <person name="Cook G.M."/>
        </authorList>
    </citation>
    <scope>FUNCTION AS AN ANTITOXIN</scope>
    <scope>FUNCTION IN TRANSCRIPTION REGULATION</scope>
    <scope>INDUCTION</scope>
    <scope>DISRUPTION PHENOTYPE</scope>
    <source>
        <strain>ATCC 700084 / mc(2)155</strain>
    </source>
</reference>
<protein>
    <recommendedName>
        <fullName evidence="3">Antitoxin MazE</fullName>
    </recommendedName>
</protein>
<comment type="function">
    <text evidence="2">Antitoxin component of a type II toxin-antitoxin (TA) system. Neutralizes the effect of cognate toxin MazF. In M.smegmatis 3 TA systems (VapB-VapC, MazE-MazF and Phd-Doc) may be involved in monitoring the nutritional supply and physiological state of the cell, linking catabolic with anabolic reactions.</text>
</comment>
<comment type="subunit">
    <text evidence="1">Forms a complex with cognate toxin MazF.</text>
</comment>
<comment type="induction">
    <text evidence="2">Constitutively expressed during exponential growth and early stationary phase, it decreases in late stationary phase; part of the mazE-mazF operon. Negatively autoregulated by one or both of MazE-MazF.</text>
</comment>
<comment type="disruption phenotype">
    <text evidence="2">The mazE-mazF operon is not essential. A triple TA mutant (missing vapB-vapC, mazE-mazF and phd-doc TA systems) survives antibiotic challenge, suggesting the TA systems are not required to generate drug-resistant cells. However the mutant is more sensitive to oxidative and heat stress, and does not survive long term starvation during aerobic growth on complex medium. There is a difference in the level of branched-chain amino acids, which may play a role in monitoring the nutritional supply and physiological state of the cell.</text>
</comment>
<dbReference type="EMBL" id="CP000480">
    <property type="protein sequence ID" value="ABK71290.1"/>
    <property type="molecule type" value="Genomic_DNA"/>
</dbReference>
<dbReference type="EMBL" id="CP001663">
    <property type="protein sequence ID" value="AFP40793.1"/>
    <property type="molecule type" value="Genomic_DNA"/>
</dbReference>
<dbReference type="RefSeq" id="WP_011729843.1">
    <property type="nucleotide sequence ID" value="NZ_SIJM01000026.1"/>
</dbReference>
<dbReference type="RefSeq" id="YP_888721.1">
    <property type="nucleotide sequence ID" value="NC_008596.1"/>
</dbReference>
<dbReference type="STRING" id="246196.MSMEG_4447"/>
<dbReference type="PaxDb" id="246196-MSMEI_4337"/>
<dbReference type="KEGG" id="msb:LJ00_22005"/>
<dbReference type="KEGG" id="msg:MSMEI_4337"/>
<dbReference type="KEGG" id="msm:MSMEG_4447"/>
<dbReference type="PATRIC" id="fig|246196.19.peg.4357"/>
<dbReference type="eggNOG" id="ENOG50330YX">
    <property type="taxonomic scope" value="Bacteria"/>
</dbReference>
<dbReference type="OrthoDB" id="3734119at2"/>
<dbReference type="Proteomes" id="UP000000757">
    <property type="component" value="Chromosome"/>
</dbReference>
<dbReference type="Proteomes" id="UP000006158">
    <property type="component" value="Chromosome"/>
</dbReference>
<dbReference type="InterPro" id="IPR021558">
    <property type="entry name" value="MazE-like"/>
</dbReference>
<dbReference type="Pfam" id="PF11455">
    <property type="entry name" value="MazE-like"/>
    <property type="match status" value="1"/>
</dbReference>
<gene>
    <name type="primary">mazE</name>
    <name type="ordered locus">MSMEG_4447</name>
    <name type="ordered locus">MSMEI_4337</name>
</gene>
<keyword id="KW-1185">Reference proteome</keyword>
<keyword id="KW-0678">Repressor</keyword>
<keyword id="KW-1277">Toxin-antitoxin system</keyword>
<keyword id="KW-0804">Transcription</keyword>
<keyword id="KW-0805">Transcription regulation</keyword>
<name>MAZE_MYCS2</name>
<evidence type="ECO:0000250" key="1">
    <source>
        <dbReference type="UniProtKB" id="O53451"/>
    </source>
</evidence>
<evidence type="ECO:0000269" key="2">
    <source>
    </source>
</evidence>
<evidence type="ECO:0000303" key="3">
    <source>
    </source>
</evidence>
<accession>A0R0N3</accession>
<sequence length="69" mass="8115">MTPARDRVRRHRERLRRQGLRPVQIWVPDVNAPEFRREAHRQSELVAAGEHEAEDQAFVDAISVDWDDA</sequence>
<organism>
    <name type="scientific">Mycolicibacterium smegmatis (strain ATCC 700084 / mc(2)155)</name>
    <name type="common">Mycobacterium smegmatis</name>
    <dbReference type="NCBI Taxonomy" id="246196"/>
    <lineage>
        <taxon>Bacteria</taxon>
        <taxon>Bacillati</taxon>
        <taxon>Actinomycetota</taxon>
        <taxon>Actinomycetes</taxon>
        <taxon>Mycobacteriales</taxon>
        <taxon>Mycobacteriaceae</taxon>
        <taxon>Mycolicibacterium</taxon>
    </lineage>
</organism>
<feature type="chain" id="PRO_0000420847" description="Antitoxin MazE">
    <location>
        <begin position="1"/>
        <end position="69"/>
    </location>
</feature>